<reference key="1">
    <citation type="journal article" date="2002" name="Nature">
        <title>Comparison of the genomes of two Xanthomonas pathogens with differing host specificities.</title>
        <authorList>
            <person name="da Silva A.C.R."/>
            <person name="Ferro J.A."/>
            <person name="Reinach F.C."/>
            <person name="Farah C.S."/>
            <person name="Furlan L.R."/>
            <person name="Quaggio R.B."/>
            <person name="Monteiro-Vitorello C.B."/>
            <person name="Van Sluys M.A."/>
            <person name="Almeida N.F. Jr."/>
            <person name="Alves L.M.C."/>
            <person name="do Amaral A.M."/>
            <person name="Bertolini M.C."/>
            <person name="Camargo L.E.A."/>
            <person name="Camarotte G."/>
            <person name="Cannavan F."/>
            <person name="Cardozo J."/>
            <person name="Chambergo F."/>
            <person name="Ciapina L.P."/>
            <person name="Cicarelli R.M.B."/>
            <person name="Coutinho L.L."/>
            <person name="Cursino-Santos J.R."/>
            <person name="El-Dorry H."/>
            <person name="Faria J.B."/>
            <person name="Ferreira A.J.S."/>
            <person name="Ferreira R.C.C."/>
            <person name="Ferro M.I.T."/>
            <person name="Formighieri E.F."/>
            <person name="Franco M.C."/>
            <person name="Greggio C.C."/>
            <person name="Gruber A."/>
            <person name="Katsuyama A.M."/>
            <person name="Kishi L.T."/>
            <person name="Leite R.P."/>
            <person name="Lemos E.G.M."/>
            <person name="Lemos M.V.F."/>
            <person name="Locali E.C."/>
            <person name="Machado M.A."/>
            <person name="Madeira A.M.B.N."/>
            <person name="Martinez-Rossi N.M."/>
            <person name="Martins E.C."/>
            <person name="Meidanis J."/>
            <person name="Menck C.F.M."/>
            <person name="Miyaki C.Y."/>
            <person name="Moon D.H."/>
            <person name="Moreira L.M."/>
            <person name="Novo M.T.M."/>
            <person name="Okura V.K."/>
            <person name="Oliveira M.C."/>
            <person name="Oliveira V.R."/>
            <person name="Pereira H.A."/>
            <person name="Rossi A."/>
            <person name="Sena J.A.D."/>
            <person name="Silva C."/>
            <person name="de Souza R.F."/>
            <person name="Spinola L.A.F."/>
            <person name="Takita M.A."/>
            <person name="Tamura R.E."/>
            <person name="Teixeira E.C."/>
            <person name="Tezza R.I.D."/>
            <person name="Trindade dos Santos M."/>
            <person name="Truffi D."/>
            <person name="Tsai S.M."/>
            <person name="White F.F."/>
            <person name="Setubal J.C."/>
            <person name="Kitajima J.P."/>
        </authorList>
    </citation>
    <scope>NUCLEOTIDE SEQUENCE [LARGE SCALE GENOMIC DNA]</scope>
    <source>
        <strain>306</strain>
    </source>
</reference>
<keyword id="KW-0067">ATP-binding</keyword>
<keyword id="KW-0963">Cytoplasm</keyword>
<keyword id="KW-0418">Kinase</keyword>
<keyword id="KW-0547">Nucleotide-binding</keyword>
<keyword id="KW-0808">Transferase</keyword>
<protein>
    <recommendedName>
        <fullName evidence="1">Cytidylate kinase</fullName>
        <shortName evidence="1">CK</shortName>
        <ecNumber evidence="1">2.7.4.25</ecNumber>
    </recommendedName>
    <alternativeName>
        <fullName evidence="1">Cytidine monophosphate kinase</fullName>
        <shortName evidence="1">CMP kinase</shortName>
    </alternativeName>
</protein>
<evidence type="ECO:0000255" key="1">
    <source>
        <dbReference type="HAMAP-Rule" id="MF_00238"/>
    </source>
</evidence>
<sequence>MTDLSPVLTIDGPSGAGKGTVSRIVAARLGWHYLDSGALYRAVGVAASWADLDVSDPAALVRCTFDTKVEFDDAGEAGLRVLVNGADATGELRLETTGALASAIAAIPEVRSALKERQRAFRRAPGLVADGRDMGTVIFPDAAYKVFLTASAEERAGRRHKQLMEKGVPVIFDDLLREIMARDARDAQRVVAPLRPAEDAVLIDTSGMGIEDVVQRVVGLLAGRTPS</sequence>
<feature type="chain" id="PRO_0000132002" description="Cytidylate kinase">
    <location>
        <begin position="1"/>
        <end position="227"/>
    </location>
</feature>
<feature type="binding site" evidence="1">
    <location>
        <begin position="12"/>
        <end position="20"/>
    </location>
    <ligand>
        <name>ATP</name>
        <dbReference type="ChEBI" id="CHEBI:30616"/>
    </ligand>
</feature>
<name>KCY_XANAC</name>
<comment type="catalytic activity">
    <reaction evidence="1">
        <text>CMP + ATP = CDP + ADP</text>
        <dbReference type="Rhea" id="RHEA:11600"/>
        <dbReference type="ChEBI" id="CHEBI:30616"/>
        <dbReference type="ChEBI" id="CHEBI:58069"/>
        <dbReference type="ChEBI" id="CHEBI:60377"/>
        <dbReference type="ChEBI" id="CHEBI:456216"/>
        <dbReference type="EC" id="2.7.4.25"/>
    </reaction>
</comment>
<comment type="catalytic activity">
    <reaction evidence="1">
        <text>dCMP + ATP = dCDP + ADP</text>
        <dbReference type="Rhea" id="RHEA:25094"/>
        <dbReference type="ChEBI" id="CHEBI:30616"/>
        <dbReference type="ChEBI" id="CHEBI:57566"/>
        <dbReference type="ChEBI" id="CHEBI:58593"/>
        <dbReference type="ChEBI" id="CHEBI:456216"/>
        <dbReference type="EC" id="2.7.4.25"/>
    </reaction>
</comment>
<comment type="subcellular location">
    <subcellularLocation>
        <location evidence="1">Cytoplasm</location>
    </subcellularLocation>
</comment>
<comment type="similarity">
    <text evidence="1">Belongs to the cytidylate kinase family. Type 1 subfamily.</text>
</comment>
<gene>
    <name evidence="1" type="primary">cmk</name>
    <name type="ordered locus">XAC2299</name>
</gene>
<proteinExistence type="inferred from homology"/>
<organism>
    <name type="scientific">Xanthomonas axonopodis pv. citri (strain 306)</name>
    <dbReference type="NCBI Taxonomy" id="190486"/>
    <lineage>
        <taxon>Bacteria</taxon>
        <taxon>Pseudomonadati</taxon>
        <taxon>Pseudomonadota</taxon>
        <taxon>Gammaproteobacteria</taxon>
        <taxon>Lysobacterales</taxon>
        <taxon>Lysobacteraceae</taxon>
        <taxon>Xanthomonas</taxon>
    </lineage>
</organism>
<accession>Q8PK76</accession>
<dbReference type="EC" id="2.7.4.25" evidence="1"/>
<dbReference type="EMBL" id="AE008923">
    <property type="protein sequence ID" value="AAM37152.1"/>
    <property type="molecule type" value="Genomic_DNA"/>
</dbReference>
<dbReference type="RefSeq" id="WP_011051497.1">
    <property type="nucleotide sequence ID" value="NC_003919.1"/>
</dbReference>
<dbReference type="SMR" id="Q8PK76"/>
<dbReference type="GeneID" id="66911418"/>
<dbReference type="KEGG" id="xac:XAC2299"/>
<dbReference type="eggNOG" id="COG0283">
    <property type="taxonomic scope" value="Bacteria"/>
</dbReference>
<dbReference type="HOGENOM" id="CLU_079959_2_0_6"/>
<dbReference type="Proteomes" id="UP000000576">
    <property type="component" value="Chromosome"/>
</dbReference>
<dbReference type="GO" id="GO:0005737">
    <property type="term" value="C:cytoplasm"/>
    <property type="evidence" value="ECO:0007669"/>
    <property type="project" value="UniProtKB-SubCell"/>
</dbReference>
<dbReference type="GO" id="GO:0005524">
    <property type="term" value="F:ATP binding"/>
    <property type="evidence" value="ECO:0007669"/>
    <property type="project" value="UniProtKB-UniRule"/>
</dbReference>
<dbReference type="GO" id="GO:0036430">
    <property type="term" value="F:CMP kinase activity"/>
    <property type="evidence" value="ECO:0007669"/>
    <property type="project" value="RHEA"/>
</dbReference>
<dbReference type="GO" id="GO:0036431">
    <property type="term" value="F:dCMP kinase activity"/>
    <property type="evidence" value="ECO:0007669"/>
    <property type="project" value="RHEA"/>
</dbReference>
<dbReference type="GO" id="GO:0006220">
    <property type="term" value="P:pyrimidine nucleotide metabolic process"/>
    <property type="evidence" value="ECO:0007669"/>
    <property type="project" value="UniProtKB-UniRule"/>
</dbReference>
<dbReference type="CDD" id="cd02020">
    <property type="entry name" value="CMPK"/>
    <property type="match status" value="1"/>
</dbReference>
<dbReference type="FunFam" id="3.40.50.300:FF:000262">
    <property type="entry name" value="Cytidylate kinase"/>
    <property type="match status" value="1"/>
</dbReference>
<dbReference type="Gene3D" id="3.40.50.300">
    <property type="entry name" value="P-loop containing nucleotide triphosphate hydrolases"/>
    <property type="match status" value="1"/>
</dbReference>
<dbReference type="HAMAP" id="MF_00238">
    <property type="entry name" value="Cytidyl_kinase_type1"/>
    <property type="match status" value="1"/>
</dbReference>
<dbReference type="InterPro" id="IPR003136">
    <property type="entry name" value="Cytidylate_kin"/>
</dbReference>
<dbReference type="InterPro" id="IPR011994">
    <property type="entry name" value="Cytidylate_kinase_dom"/>
</dbReference>
<dbReference type="InterPro" id="IPR027417">
    <property type="entry name" value="P-loop_NTPase"/>
</dbReference>
<dbReference type="NCBIfam" id="TIGR00017">
    <property type="entry name" value="cmk"/>
    <property type="match status" value="1"/>
</dbReference>
<dbReference type="Pfam" id="PF02224">
    <property type="entry name" value="Cytidylate_kin"/>
    <property type="match status" value="1"/>
</dbReference>
<dbReference type="SUPFAM" id="SSF52540">
    <property type="entry name" value="P-loop containing nucleoside triphosphate hydrolases"/>
    <property type="match status" value="1"/>
</dbReference>